<organism>
    <name type="scientific">Jasminum nudiflorum</name>
    <name type="common">Winter jasmine</name>
    <dbReference type="NCBI Taxonomy" id="126431"/>
    <lineage>
        <taxon>Eukaryota</taxon>
        <taxon>Viridiplantae</taxon>
        <taxon>Streptophyta</taxon>
        <taxon>Embryophyta</taxon>
        <taxon>Tracheophyta</taxon>
        <taxon>Spermatophyta</taxon>
        <taxon>Magnoliopsida</taxon>
        <taxon>eudicotyledons</taxon>
        <taxon>Gunneridae</taxon>
        <taxon>Pentapetalae</taxon>
        <taxon>asterids</taxon>
        <taxon>lamiids</taxon>
        <taxon>Lamiales</taxon>
        <taxon>Oleaceae</taxon>
        <taxon>Jasmineae</taxon>
        <taxon>Jasminum</taxon>
    </lineage>
</organism>
<feature type="chain" id="PRO_0000355941" description="Maturase K">
    <location>
        <begin position="1"/>
        <end position="506"/>
    </location>
</feature>
<sequence>MQEIKRYLQLDRPQQHDFLYPLIFQEYIYALAHDRGFNRSSLLENPGYDNKSSLLIVKRLITRMYQQNHFWISSNDSNQNPFFGRNKNLYPQILSEGFAFILELPFSLRLILSLERKKKKIVKSQNLRSIHSIFPFLEDNFSHFPFVLDILIPHPIHLEILVQTLRCWVKDASSLHLLRFFLHEYWNWNSLSTPKKASSSFSKRNQRLFFFLYNSHVCEYESIFVFLRNQSSHLRSTSSGALLERIYFYGKIERLVNVFLKDFQINLCLLKDPFMHYVRYQEKSILASKGTPLFMTKWKYYLVPFWQCYFSLWFHPRRIYLNQLSKNFLEFGGYLSSVRLNASVIRSQILENSFLINNAINKFDTFVPIIPLIGSLAKAQFCNVLGYPISKLVRTDLSDSDIIDRFGRICRNLSHYHSGSSKRKSLYRIKYILRLSCARTLARKHKSTVRAFLKRLGSELLEEFLMSEEQVLSLTFPKASSTLRGVYRSRIWFLDIICLHDLVNQK</sequence>
<evidence type="ECO:0000255" key="1">
    <source>
        <dbReference type="HAMAP-Rule" id="MF_01390"/>
    </source>
</evidence>
<name>MATK_JASNU</name>
<gene>
    <name evidence="1" type="primary">matK</name>
    <name type="ORF">JNC0024</name>
</gene>
<accession>Q06RF0</accession>
<dbReference type="EMBL" id="DQ673255">
    <property type="protein sequence ID" value="ABG74609.1"/>
    <property type="molecule type" value="Genomic_DNA"/>
</dbReference>
<dbReference type="RefSeq" id="YP_778471.1">
    <property type="nucleotide sequence ID" value="NC_008407.1"/>
</dbReference>
<dbReference type="GeneID" id="4319754"/>
<dbReference type="GO" id="GO:0009507">
    <property type="term" value="C:chloroplast"/>
    <property type="evidence" value="ECO:0007669"/>
    <property type="project" value="UniProtKB-SubCell"/>
</dbReference>
<dbReference type="GO" id="GO:0003723">
    <property type="term" value="F:RNA binding"/>
    <property type="evidence" value="ECO:0007669"/>
    <property type="project" value="UniProtKB-KW"/>
</dbReference>
<dbReference type="GO" id="GO:0006397">
    <property type="term" value="P:mRNA processing"/>
    <property type="evidence" value="ECO:0007669"/>
    <property type="project" value="UniProtKB-KW"/>
</dbReference>
<dbReference type="GO" id="GO:0008380">
    <property type="term" value="P:RNA splicing"/>
    <property type="evidence" value="ECO:0007669"/>
    <property type="project" value="UniProtKB-UniRule"/>
</dbReference>
<dbReference type="GO" id="GO:0008033">
    <property type="term" value="P:tRNA processing"/>
    <property type="evidence" value="ECO:0007669"/>
    <property type="project" value="UniProtKB-KW"/>
</dbReference>
<dbReference type="HAMAP" id="MF_01390">
    <property type="entry name" value="MatK"/>
    <property type="match status" value="1"/>
</dbReference>
<dbReference type="InterPro" id="IPR024937">
    <property type="entry name" value="Domain_X"/>
</dbReference>
<dbReference type="InterPro" id="IPR002866">
    <property type="entry name" value="Maturase_MatK"/>
</dbReference>
<dbReference type="InterPro" id="IPR024942">
    <property type="entry name" value="Maturase_MatK_N"/>
</dbReference>
<dbReference type="PANTHER" id="PTHR34811">
    <property type="entry name" value="MATURASE K"/>
    <property type="match status" value="1"/>
</dbReference>
<dbReference type="PANTHER" id="PTHR34811:SF1">
    <property type="entry name" value="MATURASE K"/>
    <property type="match status" value="1"/>
</dbReference>
<dbReference type="Pfam" id="PF01348">
    <property type="entry name" value="Intron_maturas2"/>
    <property type="match status" value="1"/>
</dbReference>
<dbReference type="Pfam" id="PF01824">
    <property type="entry name" value="MatK_N"/>
    <property type="match status" value="1"/>
</dbReference>
<geneLocation type="chloroplast"/>
<keyword id="KW-0150">Chloroplast</keyword>
<keyword id="KW-0507">mRNA processing</keyword>
<keyword id="KW-0934">Plastid</keyword>
<keyword id="KW-0694">RNA-binding</keyword>
<keyword id="KW-0819">tRNA processing</keyword>
<reference key="1">
    <citation type="journal article" date="2007" name="Mol. Biol. Evol.">
        <title>Gene relocations within chloroplast genomes of Jasminum and Menodora (Oleaceae) are due to multiple, overlapping inversions.</title>
        <authorList>
            <person name="Lee H.-L."/>
            <person name="Jansen R.K."/>
            <person name="Chumley T.W."/>
            <person name="Kim K.-J."/>
        </authorList>
    </citation>
    <scope>NUCLEOTIDE SEQUENCE [LARGE SCALE GENOMIC DNA]</scope>
</reference>
<proteinExistence type="inferred from homology"/>
<protein>
    <recommendedName>
        <fullName evidence="1">Maturase K</fullName>
    </recommendedName>
    <alternativeName>
        <fullName evidence="1">Intron maturase</fullName>
    </alternativeName>
</protein>
<comment type="function">
    <text evidence="1">Usually encoded in the trnK tRNA gene intron. Probably assists in splicing its own and other chloroplast group II introns.</text>
</comment>
<comment type="subcellular location">
    <subcellularLocation>
        <location>Plastid</location>
        <location>Chloroplast</location>
    </subcellularLocation>
</comment>
<comment type="similarity">
    <text evidence="1">Belongs to the intron maturase 2 family. MatK subfamily.</text>
</comment>